<feature type="chain" id="PRO_0000149078" description="Small ribosomal subunit protein eS27">
    <location>
        <begin position="1"/>
        <end position="63"/>
    </location>
</feature>
<feature type="zinc finger region" description="C4-type" evidence="1">
    <location>
        <begin position="18"/>
        <end position="40"/>
    </location>
</feature>
<feature type="binding site" evidence="1">
    <location>
        <position position="18"/>
    </location>
    <ligand>
        <name>Zn(2+)</name>
        <dbReference type="ChEBI" id="CHEBI:29105"/>
    </ligand>
</feature>
<feature type="binding site" evidence="1">
    <location>
        <position position="21"/>
    </location>
    <ligand>
        <name>Zn(2+)</name>
        <dbReference type="ChEBI" id="CHEBI:29105"/>
    </ligand>
</feature>
<feature type="binding site" evidence="1">
    <location>
        <position position="37"/>
    </location>
    <ligand>
        <name>Zn(2+)</name>
        <dbReference type="ChEBI" id="CHEBI:29105"/>
    </ligand>
</feature>
<feature type="binding site" evidence="1">
    <location>
        <position position="40"/>
    </location>
    <ligand>
        <name>Zn(2+)</name>
        <dbReference type="ChEBI" id="CHEBI:29105"/>
    </ligand>
</feature>
<keyword id="KW-0002">3D-structure</keyword>
<keyword id="KW-0479">Metal-binding</keyword>
<keyword id="KW-1185">Reference proteome</keyword>
<keyword id="KW-0687">Ribonucleoprotein</keyword>
<keyword id="KW-0689">Ribosomal protein</keyword>
<keyword id="KW-0862">Zinc</keyword>
<keyword id="KW-0863">Zinc-finger</keyword>
<dbReference type="EMBL" id="AE009950">
    <property type="protein sequence ID" value="AAL80342.1"/>
    <property type="molecule type" value="Genomic_DNA"/>
</dbReference>
<dbReference type="RefSeq" id="WP_011011331.1">
    <property type="nucleotide sequence ID" value="NZ_CP023154.1"/>
</dbReference>
<dbReference type="PDB" id="4V4N">
    <property type="method" value="EM"/>
    <property type="resolution" value="9.00 A"/>
    <property type="chains" value="W=1-63"/>
</dbReference>
<dbReference type="PDB" id="4V6U">
    <property type="method" value="EM"/>
    <property type="resolution" value="6.60 A"/>
    <property type="chains" value="AW=1-63"/>
</dbReference>
<dbReference type="PDB" id="5JB3">
    <property type="method" value="EM"/>
    <property type="resolution" value="5.34 A"/>
    <property type="chains" value="W=6-63"/>
</dbReference>
<dbReference type="PDB" id="5JBH">
    <property type="method" value="EM"/>
    <property type="resolution" value="5.34 A"/>
    <property type="chains" value="W=1-63"/>
</dbReference>
<dbReference type="PDBsum" id="4V4N"/>
<dbReference type="PDBsum" id="4V6U"/>
<dbReference type="PDBsum" id="5JB3"/>
<dbReference type="PDBsum" id="5JBH"/>
<dbReference type="EMDB" id="EMD-50611"/>
<dbReference type="EMDB" id="EMD-50612"/>
<dbReference type="EMDB" id="EMD-50613"/>
<dbReference type="EMDB" id="EMD-8149"/>
<dbReference type="SMR" id="Q8U474"/>
<dbReference type="STRING" id="186497.PF0218"/>
<dbReference type="PaxDb" id="186497-PF0218"/>
<dbReference type="KEGG" id="pfu:PF0218"/>
<dbReference type="PATRIC" id="fig|186497.12.peg.226"/>
<dbReference type="eggNOG" id="arCOG04108">
    <property type="taxonomic scope" value="Archaea"/>
</dbReference>
<dbReference type="HOGENOM" id="CLU_199465_0_0_2"/>
<dbReference type="OrthoDB" id="5718at2157"/>
<dbReference type="PhylomeDB" id="Q8U474"/>
<dbReference type="Proteomes" id="UP000001013">
    <property type="component" value="Chromosome"/>
</dbReference>
<dbReference type="GO" id="GO:1990904">
    <property type="term" value="C:ribonucleoprotein complex"/>
    <property type="evidence" value="ECO:0007669"/>
    <property type="project" value="UniProtKB-KW"/>
</dbReference>
<dbReference type="GO" id="GO:0005840">
    <property type="term" value="C:ribosome"/>
    <property type="evidence" value="ECO:0007669"/>
    <property type="project" value="UniProtKB-KW"/>
</dbReference>
<dbReference type="GO" id="GO:0003735">
    <property type="term" value="F:structural constituent of ribosome"/>
    <property type="evidence" value="ECO:0007669"/>
    <property type="project" value="InterPro"/>
</dbReference>
<dbReference type="GO" id="GO:0008270">
    <property type="term" value="F:zinc ion binding"/>
    <property type="evidence" value="ECO:0007669"/>
    <property type="project" value="UniProtKB-UniRule"/>
</dbReference>
<dbReference type="GO" id="GO:0006412">
    <property type="term" value="P:translation"/>
    <property type="evidence" value="ECO:0007669"/>
    <property type="project" value="UniProtKB-UniRule"/>
</dbReference>
<dbReference type="FunFam" id="2.20.25.100:FF:000002">
    <property type="entry name" value="30S ribosomal protein S27e"/>
    <property type="match status" value="1"/>
</dbReference>
<dbReference type="Gene3D" id="2.20.25.100">
    <property type="entry name" value="Zn-binding ribosomal proteins"/>
    <property type="match status" value="1"/>
</dbReference>
<dbReference type="HAMAP" id="MF_00371">
    <property type="entry name" value="Ribosomal_eS27"/>
    <property type="match status" value="1"/>
</dbReference>
<dbReference type="InterPro" id="IPR000592">
    <property type="entry name" value="Ribosomal_eS27"/>
</dbReference>
<dbReference type="InterPro" id="IPR023407">
    <property type="entry name" value="Ribosomal_eS27_Zn-bd_dom_sf"/>
</dbReference>
<dbReference type="InterPro" id="IPR011332">
    <property type="entry name" value="Ribosomal_zn-bd"/>
</dbReference>
<dbReference type="NCBIfam" id="NF001629">
    <property type="entry name" value="PRK00415.1"/>
    <property type="match status" value="1"/>
</dbReference>
<dbReference type="Pfam" id="PF01667">
    <property type="entry name" value="Ribosomal_S27e"/>
    <property type="match status" value="1"/>
</dbReference>
<dbReference type="SUPFAM" id="SSF57829">
    <property type="entry name" value="Zn-binding ribosomal proteins"/>
    <property type="match status" value="1"/>
</dbReference>
<dbReference type="PROSITE" id="PS01168">
    <property type="entry name" value="RIBOSOMAL_S27E"/>
    <property type="match status" value="1"/>
</dbReference>
<reference key="1">
    <citation type="journal article" date="1999" name="Genetics">
        <title>Divergence of the hyperthermophilic archaea Pyrococcus furiosus and P. horikoshii inferred from complete genomic sequences.</title>
        <authorList>
            <person name="Maeder D.L."/>
            <person name="Weiss R.B."/>
            <person name="Dunn D.M."/>
            <person name="Cherry J.L."/>
            <person name="Gonzalez J.M."/>
            <person name="DiRuggiero J."/>
            <person name="Robb F.T."/>
        </authorList>
    </citation>
    <scope>NUCLEOTIDE SEQUENCE [LARGE SCALE GENOMIC DNA]</scope>
    <source>
        <strain>ATCC 43587 / DSM 3638 / JCM 8422 / Vc1</strain>
    </source>
</reference>
<reference evidence="3" key="2">
    <citation type="journal article" date="2013" name="Nucleic Acids Res.">
        <title>Promiscuous behaviour of archaeal ribosomal proteins: implications for eukaryotic ribosome evolution.</title>
        <authorList>
            <person name="Armache J.P."/>
            <person name="Anger A.M."/>
            <person name="Marquez V."/>
            <person name="Franckenberg S."/>
            <person name="Frohlich T."/>
            <person name="Villa E."/>
            <person name="Berninghausen O."/>
            <person name="Thomm M."/>
            <person name="Arnold G.J."/>
            <person name="Beckmann R."/>
            <person name="Wilson D.N."/>
        </authorList>
    </citation>
    <scope>STRUCTURE BY ELECTRON MICROSCOPY (6.60 ANGSTROMS) IN THE 70S RIBOSOME</scope>
    <scope>SUBUNIT</scope>
</reference>
<gene>
    <name evidence="1" type="primary">rps27e</name>
    <name type="ordered locus">PF0218</name>
</gene>
<sequence>MAKPIIPMPRSRFLRVKCIDCGNEQIVFSHPATKVRCLICGATLVEPTGGKGIVKAKILEVLE</sequence>
<comment type="cofactor">
    <cofactor evidence="1">
        <name>Zn(2+)</name>
        <dbReference type="ChEBI" id="CHEBI:29105"/>
    </cofactor>
    <text evidence="1">Binds 1 zinc ion per subunit.</text>
</comment>
<comment type="subunit">
    <text evidence="1 2">Part of the 30S ribosomal subunit.</text>
</comment>
<comment type="similarity">
    <text evidence="1">Belongs to the eukaryotic ribosomal protein eS27 family.</text>
</comment>
<name>RS27_PYRFU</name>
<organism>
    <name type="scientific">Pyrococcus furiosus (strain ATCC 43587 / DSM 3638 / JCM 8422 / Vc1)</name>
    <dbReference type="NCBI Taxonomy" id="186497"/>
    <lineage>
        <taxon>Archaea</taxon>
        <taxon>Methanobacteriati</taxon>
        <taxon>Methanobacteriota</taxon>
        <taxon>Thermococci</taxon>
        <taxon>Thermococcales</taxon>
        <taxon>Thermococcaceae</taxon>
        <taxon>Pyrococcus</taxon>
    </lineage>
</organism>
<proteinExistence type="evidence at protein level"/>
<protein>
    <recommendedName>
        <fullName evidence="1">Small ribosomal subunit protein eS27</fullName>
    </recommendedName>
</protein>
<evidence type="ECO:0000255" key="1">
    <source>
        <dbReference type="HAMAP-Rule" id="MF_00371"/>
    </source>
</evidence>
<evidence type="ECO:0000269" key="2">
    <source>
    </source>
</evidence>
<evidence type="ECO:0007744" key="3">
    <source>
        <dbReference type="PDB" id="4V6U"/>
    </source>
</evidence>
<accession>Q8U474</accession>